<protein>
    <recommendedName>
        <fullName>D-alanine--D-alanine ligase B</fullName>
        <ecNumber>6.3.2.4</ecNumber>
    </recommendedName>
    <alternativeName>
        <fullName>D-Ala-D-Ala ligase B</fullName>
    </alternativeName>
    <alternativeName>
        <fullName>D-alanylalanine synthetase B</fullName>
    </alternativeName>
</protein>
<reference key="1">
    <citation type="journal article" date="2001" name="Nature">
        <title>Complete genome sequence of Salmonella enterica serovar Typhimurium LT2.</title>
        <authorList>
            <person name="McClelland M."/>
            <person name="Sanderson K.E."/>
            <person name="Spieth J."/>
            <person name="Clifton S.W."/>
            <person name="Latreille P."/>
            <person name="Courtney L."/>
            <person name="Porwollik S."/>
            <person name="Ali J."/>
            <person name="Dante M."/>
            <person name="Du F."/>
            <person name="Hou S."/>
            <person name="Layman D."/>
            <person name="Leonard S."/>
            <person name="Nguyen C."/>
            <person name="Scott K."/>
            <person name="Holmes A."/>
            <person name="Grewal N."/>
            <person name="Mulvaney E."/>
            <person name="Ryan E."/>
            <person name="Sun H."/>
            <person name="Florea L."/>
            <person name="Miller W."/>
            <person name="Stoneking T."/>
            <person name="Nhan M."/>
            <person name="Waterston R."/>
            <person name="Wilson R.K."/>
        </authorList>
    </citation>
    <scope>NUCLEOTIDE SEQUENCE [LARGE SCALE GENOMIC DNA]</scope>
    <source>
        <strain>LT2 / SGSC1412 / ATCC 700720</strain>
    </source>
</reference>
<organism>
    <name type="scientific">Salmonella typhimurium (strain LT2 / SGSC1412 / ATCC 700720)</name>
    <dbReference type="NCBI Taxonomy" id="99287"/>
    <lineage>
        <taxon>Bacteria</taxon>
        <taxon>Pseudomonadati</taxon>
        <taxon>Pseudomonadota</taxon>
        <taxon>Gammaproteobacteria</taxon>
        <taxon>Enterobacterales</taxon>
        <taxon>Enterobacteriaceae</taxon>
        <taxon>Salmonella</taxon>
    </lineage>
</organism>
<feature type="initiator methionine" description="Removed" evidence="1">
    <location>
        <position position="1"/>
    </location>
</feature>
<feature type="chain" id="PRO_0000177870" description="D-alanine--D-alanine ligase B">
    <location>
        <begin position="2"/>
        <end position="306"/>
    </location>
</feature>
<feature type="domain" description="ATP-grasp">
    <location>
        <begin position="101"/>
        <end position="303"/>
    </location>
</feature>
<feature type="binding site" evidence="1">
    <location>
        <begin position="134"/>
        <end position="189"/>
    </location>
    <ligand>
        <name>ATP</name>
        <dbReference type="ChEBI" id="CHEBI:30616"/>
    </ligand>
</feature>
<feature type="binding site" evidence="1">
    <location>
        <position position="257"/>
    </location>
    <ligand>
        <name>Mg(2+)</name>
        <dbReference type="ChEBI" id="CHEBI:18420"/>
        <label>1</label>
    </ligand>
</feature>
<feature type="binding site" evidence="1">
    <location>
        <position position="270"/>
    </location>
    <ligand>
        <name>Mg(2+)</name>
        <dbReference type="ChEBI" id="CHEBI:18420"/>
        <label>1</label>
    </ligand>
</feature>
<feature type="binding site" evidence="1">
    <location>
        <position position="270"/>
    </location>
    <ligand>
        <name>Mg(2+)</name>
        <dbReference type="ChEBI" id="CHEBI:18420"/>
        <label>2</label>
    </ligand>
</feature>
<feature type="binding site" evidence="1">
    <location>
        <position position="272"/>
    </location>
    <ligand>
        <name>Mg(2+)</name>
        <dbReference type="ChEBI" id="CHEBI:18420"/>
        <label>2</label>
    </ligand>
</feature>
<name>DDLB_SALTY</name>
<comment type="function">
    <text evidence="1">Cell wall formation.</text>
</comment>
<comment type="catalytic activity">
    <reaction>
        <text>2 D-alanine + ATP = D-alanyl-D-alanine + ADP + phosphate + H(+)</text>
        <dbReference type="Rhea" id="RHEA:11224"/>
        <dbReference type="ChEBI" id="CHEBI:15378"/>
        <dbReference type="ChEBI" id="CHEBI:30616"/>
        <dbReference type="ChEBI" id="CHEBI:43474"/>
        <dbReference type="ChEBI" id="CHEBI:57416"/>
        <dbReference type="ChEBI" id="CHEBI:57822"/>
        <dbReference type="ChEBI" id="CHEBI:456216"/>
        <dbReference type="EC" id="6.3.2.4"/>
    </reaction>
</comment>
<comment type="cofactor">
    <cofactor evidence="1">
        <name>Mg(2+)</name>
        <dbReference type="ChEBI" id="CHEBI:18420"/>
    </cofactor>
    <cofactor evidence="1">
        <name>Mn(2+)</name>
        <dbReference type="ChEBI" id="CHEBI:29035"/>
    </cofactor>
    <text evidence="1">Binds 2 magnesium or manganese ions per subunit.</text>
</comment>
<comment type="pathway">
    <text>Cell wall biogenesis; peptidoglycan biosynthesis.</text>
</comment>
<comment type="subunit">
    <text evidence="1">Monomer.</text>
</comment>
<comment type="subcellular location">
    <subcellularLocation>
        <location evidence="1">Cytoplasm</location>
    </subcellularLocation>
</comment>
<comment type="similarity">
    <text evidence="2">Belongs to the D-alanine--D-alanine ligase family.</text>
</comment>
<evidence type="ECO:0000250" key="1"/>
<evidence type="ECO:0000305" key="2"/>
<gene>
    <name type="primary">ddlB</name>
    <name type="ordered locus">STM0130</name>
</gene>
<proteinExistence type="inferred from homology"/>
<dbReference type="EC" id="6.3.2.4"/>
<dbReference type="EMBL" id="AE006468">
    <property type="protein sequence ID" value="AAL19094.1"/>
    <property type="molecule type" value="Genomic_DNA"/>
</dbReference>
<dbReference type="RefSeq" id="NP_459135.1">
    <property type="nucleotide sequence ID" value="NC_003197.2"/>
</dbReference>
<dbReference type="RefSeq" id="WP_000763905.1">
    <property type="nucleotide sequence ID" value="NC_003197.2"/>
</dbReference>
<dbReference type="SMR" id="Q8ZRU1"/>
<dbReference type="STRING" id="99287.STM0130"/>
<dbReference type="PaxDb" id="99287-STM0130"/>
<dbReference type="GeneID" id="1251648"/>
<dbReference type="KEGG" id="stm:STM0130"/>
<dbReference type="PATRIC" id="fig|99287.12.peg.136"/>
<dbReference type="HOGENOM" id="CLU_039268_1_2_6"/>
<dbReference type="OMA" id="TQYRIPC"/>
<dbReference type="PhylomeDB" id="Q8ZRU1"/>
<dbReference type="BioCyc" id="SENT99287:STM0130-MONOMER"/>
<dbReference type="UniPathway" id="UPA00219"/>
<dbReference type="Proteomes" id="UP000001014">
    <property type="component" value="Chromosome"/>
</dbReference>
<dbReference type="GO" id="GO:0005829">
    <property type="term" value="C:cytosol"/>
    <property type="evidence" value="ECO:0000318"/>
    <property type="project" value="GO_Central"/>
</dbReference>
<dbReference type="GO" id="GO:0005524">
    <property type="term" value="F:ATP binding"/>
    <property type="evidence" value="ECO:0007669"/>
    <property type="project" value="UniProtKB-KW"/>
</dbReference>
<dbReference type="GO" id="GO:0008716">
    <property type="term" value="F:D-alanine-D-alanine ligase activity"/>
    <property type="evidence" value="ECO:0000318"/>
    <property type="project" value="GO_Central"/>
</dbReference>
<dbReference type="GO" id="GO:0046872">
    <property type="term" value="F:metal ion binding"/>
    <property type="evidence" value="ECO:0007669"/>
    <property type="project" value="UniProtKB-KW"/>
</dbReference>
<dbReference type="GO" id="GO:0071555">
    <property type="term" value="P:cell wall organization"/>
    <property type="evidence" value="ECO:0007669"/>
    <property type="project" value="UniProtKB-KW"/>
</dbReference>
<dbReference type="GO" id="GO:0009252">
    <property type="term" value="P:peptidoglycan biosynthetic process"/>
    <property type="evidence" value="ECO:0000318"/>
    <property type="project" value="GO_Central"/>
</dbReference>
<dbReference type="GO" id="GO:0008360">
    <property type="term" value="P:regulation of cell shape"/>
    <property type="evidence" value="ECO:0007669"/>
    <property type="project" value="UniProtKB-KW"/>
</dbReference>
<dbReference type="FunFam" id="3.30.1490.20:FF:000007">
    <property type="entry name" value="D-alanine--D-alanine ligase"/>
    <property type="match status" value="1"/>
</dbReference>
<dbReference type="FunFam" id="3.30.470.20:FF:000008">
    <property type="entry name" value="D-alanine--D-alanine ligase"/>
    <property type="match status" value="1"/>
</dbReference>
<dbReference type="FunFam" id="3.40.50.20:FF:000013">
    <property type="entry name" value="D-alanine--D-alanine ligase"/>
    <property type="match status" value="1"/>
</dbReference>
<dbReference type="Gene3D" id="3.40.50.20">
    <property type="match status" value="1"/>
</dbReference>
<dbReference type="Gene3D" id="3.30.1490.20">
    <property type="entry name" value="ATP-grasp fold, A domain"/>
    <property type="match status" value="1"/>
</dbReference>
<dbReference type="Gene3D" id="3.30.470.20">
    <property type="entry name" value="ATP-grasp fold, B domain"/>
    <property type="match status" value="1"/>
</dbReference>
<dbReference type="HAMAP" id="MF_00047">
    <property type="entry name" value="Dala_Dala_lig"/>
    <property type="match status" value="1"/>
</dbReference>
<dbReference type="InterPro" id="IPR011761">
    <property type="entry name" value="ATP-grasp"/>
</dbReference>
<dbReference type="InterPro" id="IPR013815">
    <property type="entry name" value="ATP_grasp_subdomain_1"/>
</dbReference>
<dbReference type="InterPro" id="IPR000291">
    <property type="entry name" value="D-Ala_lig_Van_CS"/>
</dbReference>
<dbReference type="InterPro" id="IPR005905">
    <property type="entry name" value="D_ala_D_ala"/>
</dbReference>
<dbReference type="InterPro" id="IPR011095">
    <property type="entry name" value="Dala_Dala_lig_C"/>
</dbReference>
<dbReference type="InterPro" id="IPR011127">
    <property type="entry name" value="Dala_Dala_lig_N"/>
</dbReference>
<dbReference type="InterPro" id="IPR016185">
    <property type="entry name" value="PreATP-grasp_dom_sf"/>
</dbReference>
<dbReference type="NCBIfam" id="TIGR01205">
    <property type="entry name" value="D_ala_D_alaTIGR"/>
    <property type="match status" value="1"/>
</dbReference>
<dbReference type="NCBIfam" id="NF002378">
    <property type="entry name" value="PRK01372.1"/>
    <property type="match status" value="1"/>
</dbReference>
<dbReference type="PANTHER" id="PTHR23132">
    <property type="entry name" value="D-ALANINE--D-ALANINE LIGASE"/>
    <property type="match status" value="1"/>
</dbReference>
<dbReference type="PANTHER" id="PTHR23132:SF23">
    <property type="entry name" value="D-ALANINE--D-ALANINE LIGASE B"/>
    <property type="match status" value="1"/>
</dbReference>
<dbReference type="Pfam" id="PF07478">
    <property type="entry name" value="Dala_Dala_lig_C"/>
    <property type="match status" value="1"/>
</dbReference>
<dbReference type="Pfam" id="PF01820">
    <property type="entry name" value="Dala_Dala_lig_N"/>
    <property type="match status" value="1"/>
</dbReference>
<dbReference type="PIRSF" id="PIRSF039102">
    <property type="entry name" value="Ddl/VanB"/>
    <property type="match status" value="1"/>
</dbReference>
<dbReference type="SUPFAM" id="SSF56059">
    <property type="entry name" value="Glutathione synthetase ATP-binding domain-like"/>
    <property type="match status" value="1"/>
</dbReference>
<dbReference type="SUPFAM" id="SSF52440">
    <property type="entry name" value="PreATP-grasp domain"/>
    <property type="match status" value="1"/>
</dbReference>
<dbReference type="PROSITE" id="PS50975">
    <property type="entry name" value="ATP_GRASP"/>
    <property type="match status" value="1"/>
</dbReference>
<dbReference type="PROSITE" id="PS00843">
    <property type="entry name" value="DALA_DALA_LIGASE_1"/>
    <property type="match status" value="1"/>
</dbReference>
<dbReference type="PROSITE" id="PS00844">
    <property type="entry name" value="DALA_DALA_LIGASE_2"/>
    <property type="match status" value="1"/>
</dbReference>
<keyword id="KW-0067">ATP-binding</keyword>
<keyword id="KW-0133">Cell shape</keyword>
<keyword id="KW-0961">Cell wall biogenesis/degradation</keyword>
<keyword id="KW-0963">Cytoplasm</keyword>
<keyword id="KW-0436">Ligase</keyword>
<keyword id="KW-0460">Magnesium</keyword>
<keyword id="KW-0464">Manganese</keyword>
<keyword id="KW-0479">Metal-binding</keyword>
<keyword id="KW-0547">Nucleotide-binding</keyword>
<keyword id="KW-0573">Peptidoglycan synthesis</keyword>
<keyword id="KW-1185">Reference proteome</keyword>
<sequence>MADKIAVLLGGTSAERDVSLNSGAAVLAGLREGGINAHPVDPQEVDVAQLKAMGFQKVFIALHGRGGEDGTLQGMLELLGLPYTGSGVMASALSMDKLRSKLLWQGAGLPVAPWVALTRAEFEKGLSEEQKARISALGLPLIVKPSREGSSVGMTKVVEENALQGALSLAFQHDDEILIEKWLCGPEFTVAIVGEEILPSIRIQPAGTFYDYEAKYLSDETQYFCPAGLDASQEAALQSLVLQAWKALGCTGWGRIDVMLDSDGQFYLLEANTSPGMTSHSLVPMAARQAGMSFSQLVVRILELAD</sequence>
<accession>Q8ZRU1</accession>